<accession>P80303</accession>
<accession>A8K642</accession>
<accession>D3DQX5</accession>
<accession>Q8NFT5</accession>
<accession>V9HW75</accession>
<organism>
    <name type="scientific">Homo sapiens</name>
    <name type="common">Human</name>
    <dbReference type="NCBI Taxonomy" id="9606"/>
    <lineage>
        <taxon>Eukaryota</taxon>
        <taxon>Metazoa</taxon>
        <taxon>Chordata</taxon>
        <taxon>Craniata</taxon>
        <taxon>Vertebrata</taxon>
        <taxon>Euteleostomi</taxon>
        <taxon>Mammalia</taxon>
        <taxon>Eutheria</taxon>
        <taxon>Euarchontoglires</taxon>
        <taxon>Primates</taxon>
        <taxon>Haplorrhini</taxon>
        <taxon>Catarrhini</taxon>
        <taxon>Hominidae</taxon>
        <taxon>Homo</taxon>
    </lineage>
</organism>
<protein>
    <recommendedName>
        <fullName evidence="14">Nucleobindin-2</fullName>
    </recommendedName>
    <alternativeName>
        <fullName>DNA-binding protein NEFA</fullName>
    </alternativeName>
    <alternativeName>
        <fullName evidence="13">Epididymis secretory protein Li 109</fullName>
    </alternativeName>
    <alternativeName>
        <fullName>Gastric cancer antigen Zg4</fullName>
    </alternativeName>
    <alternativeName>
        <fullName>Prepronesfatin</fullName>
    </alternativeName>
    <component>
        <recommendedName>
            <fullName>Nesfatin-1</fullName>
        </recommendedName>
    </component>
</protein>
<reference key="1">
    <citation type="journal article" date="1994" name="Biol. Chem. Hoppe-Seyler">
        <title>Human protein NEFA, a novel DNA binding/EF-hand/leucine zipper protein. Molecular cloning and sequence analysis of the cDNA, isolation and characterization of the protein.</title>
        <authorList>
            <person name="Barnikol-Watanabe S."/>
            <person name="Gross N.A."/>
            <person name="Goetz H."/>
            <person name="Henkel T."/>
            <person name="Karabinos A."/>
            <person name="Kratzin H."/>
            <person name="Barnikol H.U."/>
            <person name="Hilschmann N."/>
        </authorList>
    </citation>
    <scope>NUCLEOTIDE SEQUENCE [MRNA] (ISOFORM 1)</scope>
    <scope>PARTIAL PROTEIN SEQUENCE</scope>
    <source>
        <tissue>Blood</tissue>
    </source>
</reference>
<reference key="2">
    <citation type="journal article" date="1998" name="Biochim. Biophys. Acta">
        <title>Assembly of a high-resolution map of the Acadian Usher syndrome region and localization of the nuclear EF-hand acidic gene.</title>
        <authorList>
            <person name="Deangelis M.M."/>
            <person name="Doucet J.P."/>
            <person name="Drury S."/>
            <person name="Sherry S.T."/>
            <person name="Robichaux M.B."/>
            <person name="Den Z."/>
            <person name="Pelias M.Z."/>
            <person name="Ditta G.M."/>
            <person name="Keats B.J."/>
            <person name="Deininger P.L."/>
            <person name="Batzer M.A."/>
        </authorList>
    </citation>
    <scope>NUCLEOTIDE SEQUENCE [MRNA] (ISOFORM 1)</scope>
</reference>
<reference key="3">
    <citation type="journal article" date="2002" name="Br. J. Cancer">
        <title>Serological identification and expression analysis of gastric cancer-associated genes.</title>
        <authorList>
            <person name="Line A."/>
            <person name="Stengrevics A."/>
            <person name="Slucka Z."/>
            <person name="Li G."/>
            <person name="Jankevics E."/>
            <person name="Rees R.C."/>
        </authorList>
    </citation>
    <scope>NUCLEOTIDE SEQUENCE [MRNA] (ISOFORM 1)</scope>
    <scope>TISSUE SPECIFICITY</scope>
    <scope>VARIANT GLN-402 DEL</scope>
</reference>
<reference key="4">
    <citation type="journal article" date="2010" name="Endocrinology">
        <title>Troglitazone, a ligand of peroxisome proliferator-activated receptor-gamma, stabilizes NUCB2 (Nesfatin) mRNA by activating the ERK1/2 pathway: isolation and characterization of the human NUCB2 gene.</title>
        <authorList>
            <person name="Yamada M."/>
            <person name="Horiguchi K."/>
            <person name="Umezawa R."/>
            <person name="Hashimoto K."/>
            <person name="Satoh T."/>
            <person name="Ozawa A."/>
            <person name="Shibusawa N."/>
            <person name="Monden T."/>
            <person name="Okada S."/>
            <person name="Shimizu H."/>
            <person name="Mori M."/>
        </authorList>
    </citation>
    <scope>NUCLEOTIDE SEQUENCE [GENOMIC DNA]</scope>
</reference>
<reference key="5">
    <citation type="journal article" date="2004" name="Nat. Genet.">
        <title>Complete sequencing and characterization of 21,243 full-length human cDNAs.</title>
        <authorList>
            <person name="Ota T."/>
            <person name="Suzuki Y."/>
            <person name="Nishikawa T."/>
            <person name="Otsuki T."/>
            <person name="Sugiyama T."/>
            <person name="Irie R."/>
            <person name="Wakamatsu A."/>
            <person name="Hayashi K."/>
            <person name="Sato H."/>
            <person name="Nagai K."/>
            <person name="Kimura K."/>
            <person name="Makita H."/>
            <person name="Sekine M."/>
            <person name="Obayashi M."/>
            <person name="Nishi T."/>
            <person name="Shibahara T."/>
            <person name="Tanaka T."/>
            <person name="Ishii S."/>
            <person name="Yamamoto J."/>
            <person name="Saito K."/>
            <person name="Kawai Y."/>
            <person name="Isono Y."/>
            <person name="Nakamura Y."/>
            <person name="Nagahari K."/>
            <person name="Murakami K."/>
            <person name="Yasuda T."/>
            <person name="Iwayanagi T."/>
            <person name="Wagatsuma M."/>
            <person name="Shiratori A."/>
            <person name="Sudo H."/>
            <person name="Hosoiri T."/>
            <person name="Kaku Y."/>
            <person name="Kodaira H."/>
            <person name="Kondo H."/>
            <person name="Sugawara M."/>
            <person name="Takahashi M."/>
            <person name="Kanda K."/>
            <person name="Yokoi T."/>
            <person name="Furuya T."/>
            <person name="Kikkawa E."/>
            <person name="Omura Y."/>
            <person name="Abe K."/>
            <person name="Kamihara K."/>
            <person name="Katsuta N."/>
            <person name="Sato K."/>
            <person name="Tanikawa M."/>
            <person name="Yamazaki M."/>
            <person name="Ninomiya K."/>
            <person name="Ishibashi T."/>
            <person name="Yamashita H."/>
            <person name="Murakawa K."/>
            <person name="Fujimori K."/>
            <person name="Tanai H."/>
            <person name="Kimata M."/>
            <person name="Watanabe M."/>
            <person name="Hiraoka S."/>
            <person name="Chiba Y."/>
            <person name="Ishida S."/>
            <person name="Ono Y."/>
            <person name="Takiguchi S."/>
            <person name="Watanabe S."/>
            <person name="Yosida M."/>
            <person name="Hotuta T."/>
            <person name="Kusano J."/>
            <person name="Kanehori K."/>
            <person name="Takahashi-Fujii A."/>
            <person name="Hara H."/>
            <person name="Tanase T.-O."/>
            <person name="Nomura Y."/>
            <person name="Togiya S."/>
            <person name="Komai F."/>
            <person name="Hara R."/>
            <person name="Takeuchi K."/>
            <person name="Arita M."/>
            <person name="Imose N."/>
            <person name="Musashino K."/>
            <person name="Yuuki H."/>
            <person name="Oshima A."/>
            <person name="Sasaki N."/>
            <person name="Aotsuka S."/>
            <person name="Yoshikawa Y."/>
            <person name="Matsunawa H."/>
            <person name="Ichihara T."/>
            <person name="Shiohata N."/>
            <person name="Sano S."/>
            <person name="Moriya S."/>
            <person name="Momiyama H."/>
            <person name="Satoh N."/>
            <person name="Takami S."/>
            <person name="Terashima Y."/>
            <person name="Suzuki O."/>
            <person name="Nakagawa S."/>
            <person name="Senoh A."/>
            <person name="Mizoguchi H."/>
            <person name="Goto Y."/>
            <person name="Shimizu F."/>
            <person name="Wakebe H."/>
            <person name="Hishigaki H."/>
            <person name="Watanabe T."/>
            <person name="Sugiyama A."/>
            <person name="Takemoto M."/>
            <person name="Kawakami B."/>
            <person name="Yamazaki M."/>
            <person name="Watanabe K."/>
            <person name="Kumagai A."/>
            <person name="Itakura S."/>
            <person name="Fukuzumi Y."/>
            <person name="Fujimori Y."/>
            <person name="Komiyama M."/>
            <person name="Tashiro H."/>
            <person name="Tanigami A."/>
            <person name="Fujiwara T."/>
            <person name="Ono T."/>
            <person name="Yamada K."/>
            <person name="Fujii Y."/>
            <person name="Ozaki K."/>
            <person name="Hirao M."/>
            <person name="Ohmori Y."/>
            <person name="Kawabata A."/>
            <person name="Hikiji T."/>
            <person name="Kobatake N."/>
            <person name="Inagaki H."/>
            <person name="Ikema Y."/>
            <person name="Okamoto S."/>
            <person name="Okitani R."/>
            <person name="Kawakami T."/>
            <person name="Noguchi S."/>
            <person name="Itoh T."/>
            <person name="Shigeta K."/>
            <person name="Senba T."/>
            <person name="Matsumura K."/>
            <person name="Nakajima Y."/>
            <person name="Mizuno T."/>
            <person name="Morinaga M."/>
            <person name="Sasaki M."/>
            <person name="Togashi T."/>
            <person name="Oyama M."/>
            <person name="Hata H."/>
            <person name="Watanabe M."/>
            <person name="Komatsu T."/>
            <person name="Mizushima-Sugano J."/>
            <person name="Satoh T."/>
            <person name="Shirai Y."/>
            <person name="Takahashi Y."/>
            <person name="Nakagawa K."/>
            <person name="Okumura K."/>
            <person name="Nagase T."/>
            <person name="Nomura N."/>
            <person name="Kikuchi H."/>
            <person name="Masuho Y."/>
            <person name="Yamashita R."/>
            <person name="Nakai K."/>
            <person name="Yada T."/>
            <person name="Nakamura Y."/>
            <person name="Ohara O."/>
            <person name="Isogai T."/>
            <person name="Sugano S."/>
        </authorList>
    </citation>
    <scope>NUCLEOTIDE SEQUENCE [LARGE SCALE MRNA] (ISOFORM 2)</scope>
    <scope>VARIANT GLN-402 DEL</scope>
</reference>
<reference key="6">
    <citation type="submission" date="2008-09" db="EMBL/GenBank/DDBJ databases">
        <authorList>
            <person name="Li J."/>
            <person name="Wang H."/>
            <person name="Liu J."/>
            <person name="Liu F."/>
        </authorList>
    </citation>
    <scope>NUCLEOTIDE SEQUENCE [MRNA] (ISOFORM 1)</scope>
</reference>
<reference key="7">
    <citation type="journal article" date="2006" name="Nature">
        <title>Human chromosome 11 DNA sequence and analysis including novel gene identification.</title>
        <authorList>
            <person name="Taylor T.D."/>
            <person name="Noguchi H."/>
            <person name="Totoki Y."/>
            <person name="Toyoda A."/>
            <person name="Kuroki Y."/>
            <person name="Dewar K."/>
            <person name="Lloyd C."/>
            <person name="Itoh T."/>
            <person name="Takeda T."/>
            <person name="Kim D.-W."/>
            <person name="She X."/>
            <person name="Barlow K.F."/>
            <person name="Bloom T."/>
            <person name="Bruford E."/>
            <person name="Chang J.L."/>
            <person name="Cuomo C.A."/>
            <person name="Eichler E."/>
            <person name="FitzGerald M.G."/>
            <person name="Jaffe D.B."/>
            <person name="LaButti K."/>
            <person name="Nicol R."/>
            <person name="Park H.-S."/>
            <person name="Seaman C."/>
            <person name="Sougnez C."/>
            <person name="Yang X."/>
            <person name="Zimmer A.R."/>
            <person name="Zody M.C."/>
            <person name="Birren B.W."/>
            <person name="Nusbaum C."/>
            <person name="Fujiyama A."/>
            <person name="Hattori M."/>
            <person name="Rogers J."/>
            <person name="Lander E.S."/>
            <person name="Sakaki Y."/>
        </authorList>
    </citation>
    <scope>NUCLEOTIDE SEQUENCE [LARGE SCALE GENOMIC DNA]</scope>
</reference>
<reference key="8">
    <citation type="submission" date="2005-09" db="EMBL/GenBank/DDBJ databases">
        <authorList>
            <person name="Mural R.J."/>
            <person name="Istrail S."/>
            <person name="Sutton G."/>
            <person name="Florea L."/>
            <person name="Halpern A.L."/>
            <person name="Mobarry C.M."/>
            <person name="Lippert R."/>
            <person name="Walenz B."/>
            <person name="Shatkay H."/>
            <person name="Dew I."/>
            <person name="Miller J.R."/>
            <person name="Flanigan M.J."/>
            <person name="Edwards N.J."/>
            <person name="Bolanos R."/>
            <person name="Fasulo D."/>
            <person name="Halldorsson B.V."/>
            <person name="Hannenhalli S."/>
            <person name="Turner R."/>
            <person name="Yooseph S."/>
            <person name="Lu F."/>
            <person name="Nusskern D.R."/>
            <person name="Shue B.C."/>
            <person name="Zheng X.H."/>
            <person name="Zhong F."/>
            <person name="Delcher A.L."/>
            <person name="Huson D.H."/>
            <person name="Kravitz S.A."/>
            <person name="Mouchard L."/>
            <person name="Reinert K."/>
            <person name="Remington K.A."/>
            <person name="Clark A.G."/>
            <person name="Waterman M.S."/>
            <person name="Eichler E.E."/>
            <person name="Adams M.D."/>
            <person name="Hunkapiller M.W."/>
            <person name="Myers E.W."/>
            <person name="Venter J.C."/>
        </authorList>
    </citation>
    <scope>NUCLEOTIDE SEQUENCE [LARGE SCALE GENOMIC DNA]</scope>
</reference>
<reference key="9">
    <citation type="journal article" date="2001" name="FEBS Lett.">
        <title>Golgi retention of human protein NEFA is mediated by its N-terminal Leu/Ile-rich region.</title>
        <authorList>
            <person name="Nesselhut J."/>
            <person name="Jurgan U."/>
            <person name="Onken E."/>
            <person name="Gotz H."/>
            <person name="Barnikol H.U."/>
            <person name="Hirschfeld G."/>
            <person name="Barnikol-Watanabe S."/>
            <person name="Hilschmann N."/>
        </authorList>
    </citation>
    <scope>SUBCELLULAR LOCATION</scope>
</reference>
<reference key="10">
    <citation type="journal article" date="2009" name="Sci. Signal.">
        <title>Quantitative phosphoproteomic analysis of T cell receptor signaling reveals system-wide modulation of protein-protein interactions.</title>
        <authorList>
            <person name="Mayya V."/>
            <person name="Lundgren D.H."/>
            <person name="Hwang S.-I."/>
            <person name="Rezaul K."/>
            <person name="Wu L."/>
            <person name="Eng J.K."/>
            <person name="Rodionov V."/>
            <person name="Han D.K."/>
        </authorList>
    </citation>
    <scope>PHOSPHORYLATION [LARGE SCALE ANALYSIS] AT SER-257</scope>
    <scope>IDENTIFICATION BY MASS SPECTROMETRY [LARGE SCALE ANALYSIS]</scope>
    <source>
        <tissue>Leukemic T-cell</tissue>
    </source>
</reference>
<reference key="11">
    <citation type="journal article" date="2010" name="Sci. Signal.">
        <title>Quantitative phosphoproteomics reveals widespread full phosphorylation site occupancy during mitosis.</title>
        <authorList>
            <person name="Olsen J.V."/>
            <person name="Vermeulen M."/>
            <person name="Santamaria A."/>
            <person name="Kumar C."/>
            <person name="Miller M.L."/>
            <person name="Jensen L.J."/>
            <person name="Gnad F."/>
            <person name="Cox J."/>
            <person name="Jensen T.S."/>
            <person name="Nigg E.A."/>
            <person name="Brunak S."/>
            <person name="Mann M."/>
        </authorList>
    </citation>
    <scope>PHOSPHORYLATION [LARGE SCALE ANALYSIS] AT SER-332</scope>
    <scope>IDENTIFICATION BY MASS SPECTROMETRY [LARGE SCALE ANALYSIS]</scope>
    <source>
        <tissue>Cervix carcinoma</tissue>
    </source>
</reference>
<reference key="12">
    <citation type="journal article" date="2011" name="BMC Syst. Biol.">
        <title>Initial characterization of the human central proteome.</title>
        <authorList>
            <person name="Burkard T.R."/>
            <person name="Planyavsky M."/>
            <person name="Kaupe I."/>
            <person name="Breitwieser F.P."/>
            <person name="Buerckstuemmer T."/>
            <person name="Bennett K.L."/>
            <person name="Superti-Furga G."/>
            <person name="Colinge J."/>
        </authorList>
    </citation>
    <scope>IDENTIFICATION BY MASS SPECTROMETRY [LARGE SCALE ANALYSIS]</scope>
</reference>
<reference key="13">
    <citation type="journal article" date="2014" name="J. Proteomics">
        <title>An enzyme assisted RP-RPLC approach for in-depth analysis of human liver phosphoproteome.</title>
        <authorList>
            <person name="Bian Y."/>
            <person name="Song C."/>
            <person name="Cheng K."/>
            <person name="Dong M."/>
            <person name="Wang F."/>
            <person name="Huang J."/>
            <person name="Sun D."/>
            <person name="Wang L."/>
            <person name="Ye M."/>
            <person name="Zou H."/>
        </authorList>
    </citation>
    <scope>IDENTIFICATION BY MASS SPECTROMETRY [LARGE SCALE ANALYSIS]</scope>
    <source>
        <tissue>Liver</tissue>
    </source>
</reference>
<reference key="14">
    <citation type="journal article" date="2015" name="Proteomics">
        <title>N-terminome analysis of the human mitochondrial proteome.</title>
        <authorList>
            <person name="Vaca Jacome A.S."/>
            <person name="Rabilloud T."/>
            <person name="Schaeffer-Reiss C."/>
            <person name="Rompais M."/>
            <person name="Ayoub D."/>
            <person name="Lane L."/>
            <person name="Bairoch A."/>
            <person name="Van Dorsselaer A."/>
            <person name="Carapito C."/>
        </authorList>
    </citation>
    <scope>CLEAVAGE OF SIGNAL PEPTIDE [LARGE SCALE ANALYSIS] AFTER ALA-24</scope>
    <scope>IDENTIFICATION BY MASS SPECTROMETRY [LARGE SCALE ANALYSIS]</scope>
</reference>
<reference key="15">
    <citation type="journal article" date="2018" name="J. Biol. Chem.">
        <title>A biochemical and genetic discovery pipeline identifies PLCdelta4b as a nonreceptor activator of heterotrimeric G-proteins.</title>
        <authorList>
            <person name="Maziarz M."/>
            <person name="Broselid S."/>
            <person name="DiGiacomo V."/>
            <person name="Park J.C."/>
            <person name="Luebbers A."/>
            <person name="Garcia-Navarrete L."/>
            <person name="Blanco-Canosa J.B."/>
            <person name="Baillie G.S."/>
            <person name="Garcia-Marcos M."/>
        </authorList>
    </citation>
    <scope>GBA MOTIF</scope>
</reference>
<reference key="16">
    <citation type="journal article" date="2024" name="EMBO J.">
        <title>Intestinal NUCB2/nesfatin-1 regulates hepatic glucose production via the MC4R-cAMP-GLP-1 pathway.</title>
        <authorList>
            <person name="Geng S."/>
            <person name="Yang S."/>
            <person name="Tang X."/>
            <person name="Xue S."/>
            <person name="Li K."/>
            <person name="Liu D."/>
            <person name="Chen C."/>
            <person name="Zhu Z."/>
            <person name="Zheng H."/>
            <person name="Wang Y."/>
            <person name="Yang G."/>
            <person name="Li L."/>
            <person name="Yang M."/>
        </authorList>
    </citation>
    <scope>FUNCTION</scope>
    <scope>INTERACTION WITH MC4R</scope>
</reference>
<proteinExistence type="evidence at protein level"/>
<dbReference type="EMBL" id="X76732">
    <property type="protein sequence ID" value="CAA54148.1"/>
    <property type="molecule type" value="mRNA"/>
</dbReference>
<dbReference type="EMBL" id="AF052642">
    <property type="protein sequence ID" value="AAC06300.1"/>
    <property type="molecule type" value="mRNA"/>
</dbReference>
<dbReference type="EMBL" id="AF052643">
    <property type="protein sequence ID" value="AAC06301.1"/>
    <property type="molecule type" value="mRNA"/>
</dbReference>
<dbReference type="EMBL" id="AF052644">
    <property type="protein sequence ID" value="AAC06302.1"/>
    <property type="molecule type" value="mRNA"/>
</dbReference>
<dbReference type="EMBL" id="AF450266">
    <property type="protein sequence ID" value="AAM73810.1"/>
    <property type="molecule type" value="mRNA"/>
</dbReference>
<dbReference type="EMBL" id="AB478625">
    <property type="protein sequence ID" value="BAJ09615.1"/>
    <property type="molecule type" value="Genomic_DNA"/>
</dbReference>
<dbReference type="EMBL" id="AK291507">
    <property type="protein sequence ID" value="BAF84196.1"/>
    <property type="molecule type" value="mRNA"/>
</dbReference>
<dbReference type="EMBL" id="FJ224327">
    <property type="protein sequence ID" value="ACI46019.1"/>
    <property type="molecule type" value="mRNA"/>
</dbReference>
<dbReference type="EMBL" id="AC107956">
    <property type="status" value="NOT_ANNOTATED_CDS"/>
    <property type="molecule type" value="Genomic_DNA"/>
</dbReference>
<dbReference type="EMBL" id="KF455328">
    <property type="status" value="NOT_ANNOTATED_CDS"/>
    <property type="molecule type" value="Genomic_DNA"/>
</dbReference>
<dbReference type="EMBL" id="CH471064">
    <property type="protein sequence ID" value="EAW68439.1"/>
    <property type="molecule type" value="Genomic_DNA"/>
</dbReference>
<dbReference type="EMBL" id="CH471064">
    <property type="protein sequence ID" value="EAW68440.1"/>
    <property type="molecule type" value="Genomic_DNA"/>
</dbReference>
<dbReference type="CCDS" id="CCDS41623.1">
    <molecule id="P80303-1"/>
</dbReference>
<dbReference type="PIR" id="S55272">
    <property type="entry name" value="S55272"/>
</dbReference>
<dbReference type="RefSeq" id="NP_001339593.1">
    <molecule id="P80303-1"/>
    <property type="nucleotide sequence ID" value="NM_001352664.2"/>
</dbReference>
<dbReference type="RefSeq" id="NP_001339597.1">
    <molecule id="P80303-1"/>
    <property type="nucleotide sequence ID" value="NM_001352668.2"/>
</dbReference>
<dbReference type="RefSeq" id="NP_001339598.1">
    <molecule id="P80303-1"/>
    <property type="nucleotide sequence ID" value="NM_001352669.2"/>
</dbReference>
<dbReference type="RefSeq" id="NP_001339599.1">
    <molecule id="P80303-1"/>
    <property type="nucleotide sequence ID" value="NM_001352670.2"/>
</dbReference>
<dbReference type="RefSeq" id="NP_001339601.1">
    <molecule id="P80303-1"/>
    <property type="nucleotide sequence ID" value="NM_001352672.2"/>
</dbReference>
<dbReference type="RefSeq" id="NP_005004.1">
    <molecule id="P80303-1"/>
    <property type="nucleotide sequence ID" value="NM_005013.4"/>
</dbReference>
<dbReference type="RefSeq" id="XP_016873295.1">
    <property type="nucleotide sequence ID" value="XM_017017806.1"/>
</dbReference>
<dbReference type="RefSeq" id="XP_016873296.1">
    <property type="nucleotide sequence ID" value="XM_017017807.1"/>
</dbReference>
<dbReference type="RefSeq" id="XP_016873297.1">
    <property type="nucleotide sequence ID" value="XM_017017808.1"/>
</dbReference>
<dbReference type="RefSeq" id="XP_016873298.1">
    <property type="nucleotide sequence ID" value="XM_017017809.1"/>
</dbReference>
<dbReference type="RefSeq" id="XP_016873299.1">
    <property type="nucleotide sequence ID" value="XM_017017810.1"/>
</dbReference>
<dbReference type="RefSeq" id="XP_016873300.1">
    <property type="nucleotide sequence ID" value="XM_017017811.1"/>
</dbReference>
<dbReference type="RefSeq" id="XP_016873301.1">
    <molecule id="P80303-1"/>
    <property type="nucleotide sequence ID" value="XM_017017812.3"/>
</dbReference>
<dbReference type="RefSeq" id="XP_016873302.1">
    <molecule id="P80303-1"/>
    <property type="nucleotide sequence ID" value="XM_017017813.2"/>
</dbReference>
<dbReference type="RefSeq" id="XP_016873303.1">
    <molecule id="P80303-1"/>
    <property type="nucleotide sequence ID" value="XM_017017814.2"/>
</dbReference>
<dbReference type="RefSeq" id="XP_016873304.1">
    <property type="nucleotide sequence ID" value="XM_017017815.1"/>
</dbReference>
<dbReference type="RefSeq" id="XP_016873305.1">
    <property type="nucleotide sequence ID" value="XM_017017816.1"/>
</dbReference>
<dbReference type="RefSeq" id="XP_016873306.1">
    <molecule id="P80303-1"/>
    <property type="nucleotide sequence ID" value="XM_017017817.2"/>
</dbReference>
<dbReference type="RefSeq" id="XP_016873307.1">
    <molecule id="P80303-1"/>
    <property type="nucleotide sequence ID" value="XM_017017818.3"/>
</dbReference>
<dbReference type="RefSeq" id="XP_016873308.1">
    <property type="nucleotide sequence ID" value="XM_017017819.1"/>
</dbReference>
<dbReference type="RefSeq" id="XP_047282941.1">
    <molecule id="P80303-1"/>
    <property type="nucleotide sequence ID" value="XM_047426985.1"/>
</dbReference>
<dbReference type="RefSeq" id="XP_047282942.1">
    <molecule id="P80303-1"/>
    <property type="nucleotide sequence ID" value="XM_047426986.1"/>
</dbReference>
<dbReference type="RefSeq" id="XP_047282943.1">
    <molecule id="P80303-1"/>
    <property type="nucleotide sequence ID" value="XM_047426987.1"/>
</dbReference>
<dbReference type="RefSeq" id="XP_047282944.1">
    <molecule id="P80303-1"/>
    <property type="nucleotide sequence ID" value="XM_047426988.1"/>
</dbReference>
<dbReference type="RefSeq" id="XP_054224876.1">
    <molecule id="P80303-1"/>
    <property type="nucleotide sequence ID" value="XM_054368901.1"/>
</dbReference>
<dbReference type="RefSeq" id="XP_054224877.1">
    <molecule id="P80303-1"/>
    <property type="nucleotide sequence ID" value="XM_054368902.1"/>
</dbReference>
<dbReference type="RefSeq" id="XP_054224878.1">
    <molecule id="P80303-1"/>
    <property type="nucleotide sequence ID" value="XM_054368903.1"/>
</dbReference>
<dbReference type="RefSeq" id="XP_054224879.1">
    <molecule id="P80303-1"/>
    <property type="nucleotide sequence ID" value="XM_054368904.1"/>
</dbReference>
<dbReference type="RefSeq" id="XP_054224880.1">
    <molecule id="P80303-1"/>
    <property type="nucleotide sequence ID" value="XM_054368905.1"/>
</dbReference>
<dbReference type="RefSeq" id="XP_054224881.1">
    <molecule id="P80303-1"/>
    <property type="nucleotide sequence ID" value="XM_054368906.1"/>
</dbReference>
<dbReference type="RefSeq" id="XP_054224882.1">
    <molecule id="P80303-1"/>
    <property type="nucleotide sequence ID" value="XM_054368907.1"/>
</dbReference>
<dbReference type="RefSeq" id="XP_054224883.1">
    <molecule id="P80303-1"/>
    <property type="nucleotide sequence ID" value="XM_054368908.1"/>
</dbReference>
<dbReference type="RefSeq" id="XP_054224884.1">
    <molecule id="P80303-1"/>
    <property type="nucleotide sequence ID" value="XM_054368909.1"/>
</dbReference>
<dbReference type="SMR" id="P80303"/>
<dbReference type="BioGRID" id="110979">
    <property type="interactions" value="92"/>
</dbReference>
<dbReference type="FunCoup" id="P80303">
    <property type="interactions" value="2211"/>
</dbReference>
<dbReference type="IntAct" id="P80303">
    <property type="interactions" value="39"/>
</dbReference>
<dbReference type="MINT" id="P80303"/>
<dbReference type="STRING" id="9606.ENSP00000436455"/>
<dbReference type="DrugBank" id="DB11093">
    <property type="generic name" value="Calcium citrate"/>
</dbReference>
<dbReference type="DrugBank" id="DB11348">
    <property type="generic name" value="Calcium Phosphate"/>
</dbReference>
<dbReference type="DrugBank" id="DB14481">
    <property type="generic name" value="Calcium phosphate dihydrate"/>
</dbReference>
<dbReference type="GlyCosmos" id="P80303">
    <property type="glycosylation" value="1 site, 1 glycan"/>
</dbReference>
<dbReference type="GlyGen" id="P80303">
    <property type="glycosylation" value="11 sites, 3 O-linked glycans (10 sites)"/>
</dbReference>
<dbReference type="iPTMnet" id="P80303"/>
<dbReference type="MetOSite" id="P80303"/>
<dbReference type="PhosphoSitePlus" id="P80303"/>
<dbReference type="BioMuta" id="NUCB2"/>
<dbReference type="DMDM" id="224471846"/>
<dbReference type="jPOST" id="P80303"/>
<dbReference type="MassIVE" id="P80303"/>
<dbReference type="PaxDb" id="9606-ENSP00000436455"/>
<dbReference type="PeptideAtlas" id="P80303"/>
<dbReference type="ProteomicsDB" id="57677">
    <molecule id="P80303-1"/>
</dbReference>
<dbReference type="ProteomicsDB" id="57678">
    <molecule id="P80303-2"/>
</dbReference>
<dbReference type="Pumba" id="P80303"/>
<dbReference type="Antibodypedia" id="1610">
    <property type="antibodies" value="323 antibodies from 30 providers"/>
</dbReference>
<dbReference type="DNASU" id="4925"/>
<dbReference type="Ensembl" id="ENST00000323688.10">
    <molecule id="P80303-2"/>
    <property type="protein sequence ID" value="ENSP00000320168.6"/>
    <property type="gene ID" value="ENSG00000070081.18"/>
</dbReference>
<dbReference type="Ensembl" id="ENST00000529010.6">
    <molecule id="P80303-1"/>
    <property type="protein sequence ID" value="ENSP00000436455.1"/>
    <property type="gene ID" value="ENSG00000070081.18"/>
</dbReference>
<dbReference type="GeneID" id="4925"/>
<dbReference type="KEGG" id="hsa:4925"/>
<dbReference type="MANE-Select" id="ENST00000529010.6">
    <property type="protein sequence ID" value="ENSP00000436455.1"/>
    <property type="RefSeq nucleotide sequence ID" value="NM_005013.4"/>
    <property type="RefSeq protein sequence ID" value="NP_005004.1"/>
</dbReference>
<dbReference type="UCSC" id="uc001mmw.4">
    <property type="organism name" value="human"/>
</dbReference>
<dbReference type="AGR" id="HGNC:8044"/>
<dbReference type="CTD" id="4925"/>
<dbReference type="DisGeNET" id="4925"/>
<dbReference type="GeneCards" id="NUCB2"/>
<dbReference type="HGNC" id="HGNC:8044">
    <property type="gene designation" value="NUCB2"/>
</dbReference>
<dbReference type="HPA" id="ENSG00000070081">
    <property type="expression patterns" value="Tissue enhanced (pancreas, salivary gland)"/>
</dbReference>
<dbReference type="MIM" id="608020">
    <property type="type" value="gene"/>
</dbReference>
<dbReference type="neXtProt" id="NX_P80303"/>
<dbReference type="OpenTargets" id="ENSG00000070081"/>
<dbReference type="PharmGKB" id="PA31826"/>
<dbReference type="VEuPathDB" id="HostDB:ENSG00000070081"/>
<dbReference type="eggNOG" id="KOG3866">
    <property type="taxonomic scope" value="Eukaryota"/>
</dbReference>
<dbReference type="GeneTree" id="ENSGT00390000001927"/>
<dbReference type="InParanoid" id="P80303"/>
<dbReference type="OMA" id="QETDTNH"/>
<dbReference type="OrthoDB" id="5982823at2759"/>
<dbReference type="PAN-GO" id="P80303">
    <property type="GO annotations" value="2 GO annotations based on evolutionary models"/>
</dbReference>
<dbReference type="PhylomeDB" id="P80303"/>
<dbReference type="TreeFam" id="TF323218"/>
<dbReference type="PathwayCommons" id="P80303"/>
<dbReference type="SignaLink" id="P80303"/>
<dbReference type="BioGRID-ORCS" id="4925">
    <property type="hits" value="29 hits in 1164 CRISPR screens"/>
</dbReference>
<dbReference type="ChiTaRS" id="NUCB2">
    <property type="organism name" value="human"/>
</dbReference>
<dbReference type="GeneWiki" id="NUCB2"/>
<dbReference type="GenomeRNAi" id="4925"/>
<dbReference type="Pharos" id="P80303">
    <property type="development level" value="Tbio"/>
</dbReference>
<dbReference type="PRO" id="PR:P80303"/>
<dbReference type="Proteomes" id="UP000005640">
    <property type="component" value="Chromosome 11"/>
</dbReference>
<dbReference type="RNAct" id="P80303">
    <property type="molecule type" value="protein"/>
</dbReference>
<dbReference type="Bgee" id="ENSG00000070081">
    <property type="expression patterns" value="Expressed in parotid gland and 208 other cell types or tissues"/>
</dbReference>
<dbReference type="ExpressionAtlas" id="P80303">
    <property type="expression patterns" value="baseline and differential"/>
</dbReference>
<dbReference type="GO" id="GO:0005829">
    <property type="term" value="C:cytosol"/>
    <property type="evidence" value="ECO:0000304"/>
    <property type="project" value="ProtInc"/>
</dbReference>
<dbReference type="GO" id="GO:0005783">
    <property type="term" value="C:endoplasmic reticulum"/>
    <property type="evidence" value="ECO:0007669"/>
    <property type="project" value="UniProtKB-SubCell"/>
</dbReference>
<dbReference type="GO" id="GO:0005793">
    <property type="term" value="C:endoplasmic reticulum-Golgi intermediate compartment"/>
    <property type="evidence" value="ECO:0000314"/>
    <property type="project" value="UniProtKB"/>
</dbReference>
<dbReference type="GO" id="GO:0070062">
    <property type="term" value="C:extracellular exosome"/>
    <property type="evidence" value="ECO:0007005"/>
    <property type="project" value="UniProtKB"/>
</dbReference>
<dbReference type="GO" id="GO:0005615">
    <property type="term" value="C:extracellular space"/>
    <property type="evidence" value="ECO:0007005"/>
    <property type="project" value="UniProtKB"/>
</dbReference>
<dbReference type="GO" id="GO:0005794">
    <property type="term" value="C:Golgi apparatus"/>
    <property type="evidence" value="ECO:0000314"/>
    <property type="project" value="HPA"/>
</dbReference>
<dbReference type="GO" id="GO:0005640">
    <property type="term" value="C:nuclear outer membrane"/>
    <property type="evidence" value="ECO:0007669"/>
    <property type="project" value="Ensembl"/>
</dbReference>
<dbReference type="GO" id="GO:0005886">
    <property type="term" value="C:plasma membrane"/>
    <property type="evidence" value="ECO:0000304"/>
    <property type="project" value="ProtInc"/>
</dbReference>
<dbReference type="GO" id="GO:0005509">
    <property type="term" value="F:calcium ion binding"/>
    <property type="evidence" value="ECO:0000318"/>
    <property type="project" value="GO_Central"/>
</dbReference>
<dbReference type="GO" id="GO:0003677">
    <property type="term" value="F:DNA binding"/>
    <property type="evidence" value="ECO:0000304"/>
    <property type="project" value="ProtInc"/>
</dbReference>
<dbReference type="GO" id="GO:0001965">
    <property type="term" value="F:G-protein alpha-subunit binding"/>
    <property type="evidence" value="ECO:0000250"/>
    <property type="project" value="UniProtKB"/>
</dbReference>
<dbReference type="GO" id="GO:0005085">
    <property type="term" value="F:guanyl-nucleotide exchange factor activity"/>
    <property type="evidence" value="ECO:0000250"/>
    <property type="project" value="UniProtKB"/>
</dbReference>
<dbReference type="GO" id="GO:0007264">
    <property type="term" value="P:small GTPase-mediated signal transduction"/>
    <property type="evidence" value="ECO:0000250"/>
    <property type="project" value="UniProtKB"/>
</dbReference>
<dbReference type="FunFam" id="1.10.238.10:FF:000045">
    <property type="entry name" value="Nucleobindin 2"/>
    <property type="match status" value="1"/>
</dbReference>
<dbReference type="Gene3D" id="1.10.238.10">
    <property type="entry name" value="EF-hand"/>
    <property type="match status" value="1"/>
</dbReference>
<dbReference type="InterPro" id="IPR011992">
    <property type="entry name" value="EF-hand-dom_pair"/>
</dbReference>
<dbReference type="InterPro" id="IPR018247">
    <property type="entry name" value="EF_Hand_1_Ca_BS"/>
</dbReference>
<dbReference type="InterPro" id="IPR002048">
    <property type="entry name" value="EF_hand_dom"/>
</dbReference>
<dbReference type="InterPro" id="IPR040250">
    <property type="entry name" value="Nucleobindin"/>
</dbReference>
<dbReference type="PANTHER" id="PTHR19237">
    <property type="entry name" value="NUCLEOBINDIN"/>
    <property type="match status" value="1"/>
</dbReference>
<dbReference type="PANTHER" id="PTHR19237:SF22">
    <property type="entry name" value="NUCLEOBINDIN-2"/>
    <property type="match status" value="1"/>
</dbReference>
<dbReference type="Pfam" id="PF13499">
    <property type="entry name" value="EF-hand_7"/>
    <property type="match status" value="1"/>
</dbReference>
<dbReference type="Pfam" id="PF25434">
    <property type="entry name" value="NUCB1_N"/>
    <property type="match status" value="1"/>
</dbReference>
<dbReference type="SMART" id="SM00054">
    <property type="entry name" value="EFh"/>
    <property type="match status" value="2"/>
</dbReference>
<dbReference type="SUPFAM" id="SSF47473">
    <property type="entry name" value="EF-hand"/>
    <property type="match status" value="1"/>
</dbReference>
<dbReference type="PROSITE" id="PS00018">
    <property type="entry name" value="EF_HAND_1"/>
    <property type="match status" value="2"/>
</dbReference>
<dbReference type="PROSITE" id="PS50222">
    <property type="entry name" value="EF_HAND_2"/>
    <property type="match status" value="2"/>
</dbReference>
<gene>
    <name evidence="16" type="primary">NUCB2</name>
    <name type="synonym">NEFA</name>
</gene>
<feature type="signal peptide" evidence="4 19">
    <location>
        <begin position="1"/>
        <end position="24"/>
    </location>
</feature>
<feature type="chain" id="PRO_0000004165" description="Nucleobindin-2">
    <location>
        <begin position="25"/>
        <end position="420"/>
    </location>
</feature>
<feature type="chain" id="PRO_0000419819" description="Nesfatin-1">
    <location>
        <begin position="25"/>
        <end position="106"/>
    </location>
</feature>
<feature type="domain" description="EF-hand 1" evidence="5">
    <location>
        <begin position="241"/>
        <end position="276"/>
    </location>
</feature>
<feature type="domain" description="EF-hand 2" evidence="5">
    <location>
        <begin position="293"/>
        <end position="328"/>
    </location>
</feature>
<feature type="DNA-binding region" evidence="1">
    <location>
        <begin position="171"/>
        <end position="223"/>
    </location>
</feature>
<feature type="region of interest" description="Disordered" evidence="6">
    <location>
        <begin position="195"/>
        <end position="225"/>
    </location>
</feature>
<feature type="region of interest" description="Binds to necdin" evidence="1">
    <location>
        <begin position="213"/>
        <end position="420"/>
    </location>
</feature>
<feature type="region of interest" description="Disordered" evidence="6">
    <location>
        <begin position="398"/>
        <end position="420"/>
    </location>
</feature>
<feature type="short sequence motif" description="GBA" evidence="10">
    <location>
        <begin position="304"/>
        <end position="334"/>
    </location>
</feature>
<feature type="compositionally biased region" description="Basic and acidic residues" evidence="6">
    <location>
        <begin position="195"/>
        <end position="212"/>
    </location>
</feature>
<feature type="binding site" evidence="5">
    <location>
        <position position="254"/>
    </location>
    <ligand>
        <name>Ca(2+)</name>
        <dbReference type="ChEBI" id="CHEBI:29108"/>
        <label>1</label>
    </ligand>
</feature>
<feature type="binding site" evidence="5">
    <location>
        <position position="256"/>
    </location>
    <ligand>
        <name>Ca(2+)</name>
        <dbReference type="ChEBI" id="CHEBI:29108"/>
        <label>1</label>
    </ligand>
</feature>
<feature type="binding site" evidence="5">
    <location>
        <position position="258"/>
    </location>
    <ligand>
        <name>Ca(2+)</name>
        <dbReference type="ChEBI" id="CHEBI:29108"/>
        <label>1</label>
    </ligand>
</feature>
<feature type="binding site" evidence="5">
    <location>
        <position position="265"/>
    </location>
    <ligand>
        <name>Ca(2+)</name>
        <dbReference type="ChEBI" id="CHEBI:29108"/>
        <label>1</label>
    </ligand>
</feature>
<feature type="binding site" evidence="5">
    <location>
        <position position="306"/>
    </location>
    <ligand>
        <name>Ca(2+)</name>
        <dbReference type="ChEBI" id="CHEBI:29108"/>
        <label>2</label>
    </ligand>
</feature>
<feature type="binding site" evidence="5">
    <location>
        <position position="308"/>
    </location>
    <ligand>
        <name>Ca(2+)</name>
        <dbReference type="ChEBI" id="CHEBI:29108"/>
        <label>2</label>
    </ligand>
</feature>
<feature type="binding site" evidence="5">
    <location>
        <position position="310"/>
    </location>
    <ligand>
        <name>Ca(2+)</name>
        <dbReference type="ChEBI" id="CHEBI:29108"/>
        <label>2</label>
    </ligand>
</feature>
<feature type="binding site" evidence="5">
    <location>
        <position position="317"/>
    </location>
    <ligand>
        <name>Ca(2+)</name>
        <dbReference type="ChEBI" id="CHEBI:29108"/>
        <label>2</label>
    </ligand>
</feature>
<feature type="modified residue" description="Phosphoserine" evidence="17">
    <location>
        <position position="257"/>
    </location>
</feature>
<feature type="modified residue" description="Phosphoserine" evidence="18">
    <location>
        <position position="332"/>
    </location>
</feature>
<feature type="splice variant" id="VSP_036450" description="In isoform 2." evidence="12">
    <original>HI</original>
    <variation>RV</variation>
    <location>
        <begin position="419"/>
        <end position="420"/>
    </location>
</feature>
<feature type="sequence variant" id="VAR_024399" description="In dbSNP:rs757081.">
    <original>Q</original>
    <variation>E</variation>
    <location>
        <position position="338"/>
    </location>
</feature>
<feature type="sequence variant" id="VAR_020923" evidence="8 9">
    <location>
        <position position="402"/>
    </location>
</feature>
<feature type="sequence conflict" description="In Ref. 5; BAF84196." evidence="14" ref="5">
    <original>F</original>
    <variation>L</variation>
    <location>
        <position position="150"/>
    </location>
</feature>
<keyword id="KW-0025">Alternative splicing</keyword>
<keyword id="KW-0106">Calcium</keyword>
<keyword id="KW-0165">Cleavage on pair of basic residues</keyword>
<keyword id="KW-0963">Cytoplasm</keyword>
<keyword id="KW-0903">Direct protein sequencing</keyword>
<keyword id="KW-0238">DNA-binding</keyword>
<keyword id="KW-0256">Endoplasmic reticulum</keyword>
<keyword id="KW-0333">Golgi apparatus</keyword>
<keyword id="KW-0344">Guanine-nucleotide releasing factor</keyword>
<keyword id="KW-0472">Membrane</keyword>
<keyword id="KW-0479">Metal-binding</keyword>
<keyword id="KW-0539">Nucleus</keyword>
<keyword id="KW-0597">Phosphoprotein</keyword>
<keyword id="KW-1267">Proteomics identification</keyword>
<keyword id="KW-1185">Reference proteome</keyword>
<keyword id="KW-0677">Repeat</keyword>
<keyword id="KW-0964">Secreted</keyword>
<keyword id="KW-0732">Signal</keyword>
<name>NUCB2_HUMAN</name>
<evidence type="ECO:0000250" key="1"/>
<evidence type="ECO:0000250" key="2">
    <source>
        <dbReference type="UniProtKB" id="P81117"/>
    </source>
</evidence>
<evidence type="ECO:0000250" key="3">
    <source>
        <dbReference type="UniProtKB" id="Q9JI85"/>
    </source>
</evidence>
<evidence type="ECO:0000255" key="4"/>
<evidence type="ECO:0000255" key="5">
    <source>
        <dbReference type="PROSITE-ProRule" id="PRU00448"/>
    </source>
</evidence>
<evidence type="ECO:0000256" key="6">
    <source>
        <dbReference type="SAM" id="MobiDB-lite"/>
    </source>
</evidence>
<evidence type="ECO:0000269" key="7">
    <source>
    </source>
</evidence>
<evidence type="ECO:0000269" key="8">
    <source>
    </source>
</evidence>
<evidence type="ECO:0000269" key="9">
    <source>
    </source>
</evidence>
<evidence type="ECO:0000269" key="10">
    <source>
    </source>
</evidence>
<evidence type="ECO:0000269" key="11">
    <source>
    </source>
</evidence>
<evidence type="ECO:0000303" key="12">
    <source>
    </source>
</evidence>
<evidence type="ECO:0000303" key="13">
    <source ref="6"/>
</evidence>
<evidence type="ECO:0000305" key="14"/>
<evidence type="ECO:0000305" key="15">
    <source>
    </source>
</evidence>
<evidence type="ECO:0000312" key="16">
    <source>
        <dbReference type="HGNC" id="HGNC:8044"/>
    </source>
</evidence>
<evidence type="ECO:0007744" key="17">
    <source>
    </source>
</evidence>
<evidence type="ECO:0007744" key="18">
    <source>
    </source>
</evidence>
<evidence type="ECO:0007744" key="19">
    <source>
    </source>
</evidence>
<sequence>MRWRTILLQYCFLLITCLLTALEAVPIDIDKTKVQNIHPVESAKIEPPDTGLYYDEYLKQVIDVLETDKHFREKLQKADIEEIKSGRLSKELDLVSHHVRTKLDELKRQEVGRLRMLIKAKLDSLQDIGMDHQALLKQFDHLNHLNPDKFESTDLDMLIKAATSDLEHYDKTRHEEFKKYEMMKEHERREYLKTLNEEKRKEEESKFEEMKKKHENHPKVNHPGSKDQLKEVWEETDGLDPNDFDPKTFFKLHDVNSDGFLDEQELEALFTKELEKVYDPKNEEDDMVEMEEERLRMREHVMNEVDTNKDRLVTLEEFLKATEKKEFLEPDSWETLDQQQFFTEEELKEYENIIALQENELKKKADELQKQKEELQRQHDQLEAQKLEYHQVIQQMEQKKLQQGIPPSGPAGELKFEPHI</sequence>
<comment type="function">
    <text evidence="2 3">Calcium-binding protein which may have a role in calcium homeostasis (By similarity). Acts as a non-receptor guanine nucleotide exchange factor which binds to and activates guanine nucleotide-binding protein (G-protein) alpha subunit GNAI3 (By similarity).</text>
</comment>
<comment type="function">
    <molecule>Nesfatin-1</molecule>
    <text evidence="3 11">Anorexigenic peptide, seems to play an important role in hypothalamic pathways regulating food intake and energy homeostasis, acting in a leptin-independent manner. May also exert hypertensive roles and modulate blood pressure through directly acting on peripheral arterial resistance. In intestinal epithelial cells, plays a role in the inhibition of hepatic glucose production via MC4R receptor leading to increased cyclic adenosine monophosphate (cAMP) levels and glucagon-like peptide 1 (GLP-1) secretion (PubMed:39562740).</text>
</comment>
<comment type="subunit">
    <text evidence="2 3 11">Interacts (via GBA motif) with guanine nucleotide-binding protein G(i) alpha subunit GNAI3 (By similarity). Preferentially interacts with inactive rather than active GNAI3 (By similarity). Interaction with GNAI3 is inhibited when NUCB2 binds calcium, probably due to a conformational change which renders the GBA motif inaccessible (By similarity). Binds to the postmitotic growth suppressor NDN; coexpression abolishes NUCB2 secretion (By similarity). Interacts with MC4R (PubMed:39562740).</text>
</comment>
<comment type="interaction">
    <interactant intactId="EBI-2296670">
        <id>P80303</id>
    </interactant>
    <interactant intactId="EBI-448167">
        <id>P24522</id>
        <label>GADD45A</label>
    </interactant>
    <organismsDiffer>false</organismsDiffer>
    <experiments>2</experiments>
</comment>
<comment type="interaction">
    <interactant intactId="EBI-2296670">
        <id>P80303</id>
    </interactant>
    <interactant intactId="EBI-2622179">
        <id>Q02818</id>
        <label>NUCB1</label>
    </interactant>
    <organismsDiffer>false</organismsDiffer>
    <experiments>2</experiments>
</comment>
<comment type="subcellular location">
    <subcellularLocation>
        <location evidence="7">Golgi apparatus</location>
    </subcellularLocation>
    <subcellularLocation>
        <location evidence="7">Membrane</location>
        <topology evidence="7">Peripheral membrane protein</topology>
    </subcellularLocation>
    <subcellularLocation>
        <location evidence="7">Cytoplasm</location>
    </subcellularLocation>
    <subcellularLocation>
        <location evidence="7">Secreted</location>
    </subcellularLocation>
    <subcellularLocation>
        <location evidence="1">Endoplasmic reticulum</location>
    </subcellularLocation>
    <subcellularLocation>
        <location evidence="1">Nucleus envelope</location>
    </subcellularLocation>
    <text>Golgi retention is mediated by its N-terminal region.</text>
</comment>
<comment type="subcellular location">
    <molecule>Nesfatin-1</molecule>
    <subcellularLocation>
        <location>Secreted</location>
    </subcellularLocation>
</comment>
<comment type="alternative products">
    <event type="alternative splicing"/>
    <isoform>
        <id>P80303-1</id>
        <name>1</name>
        <sequence type="displayed"/>
    </isoform>
    <isoform>
        <id>P80303-2</id>
        <name>2</name>
        <sequence type="described" ref="VSP_036450"/>
    </isoform>
</comment>
<comment type="tissue specificity">
    <text evidence="8">Predominantly expressed in spleen, testis and normal stomach.</text>
</comment>
<comment type="domain">
    <text evidence="10">The GBA (G-alpha binding and activating) motif mediates binding to the alpha subunits of guanine nucleotide-binding proteins (G proteins).</text>
</comment>
<comment type="polymorphism">
    <text evidence="15">Deletion of Gln-402 is frequent.</text>
</comment>
<comment type="miscellaneous">
    <text>NEFA stands for N=DNA-binding; EF=EF-hand; A=Acidic region.</text>
</comment>
<comment type="similarity">
    <text evidence="14">Belongs to the nucleobindin family.</text>
</comment>